<gene>
    <name type="ordered locus">Npun_F4554</name>
</gene>
<comment type="catalytic activity">
    <reaction evidence="1">
        <text>(4aS,6R)-4a-hydroxy-L-erythro-5,6,7,8-tetrahydrobiopterin = (6R)-L-erythro-6,7-dihydrobiopterin + H2O</text>
        <dbReference type="Rhea" id="RHEA:11920"/>
        <dbReference type="ChEBI" id="CHEBI:15377"/>
        <dbReference type="ChEBI" id="CHEBI:15642"/>
        <dbReference type="ChEBI" id="CHEBI:43120"/>
        <dbReference type="EC" id="4.2.1.96"/>
    </reaction>
</comment>
<comment type="similarity">
    <text evidence="1">Belongs to the pterin-4-alpha-carbinolamine dehydratase family.</text>
</comment>
<feature type="chain" id="PRO_1000192920" description="Putative pterin-4-alpha-carbinolamine dehydratase">
    <location>
        <begin position="1"/>
        <end position="93"/>
    </location>
</feature>
<accession>B2IVV2</accession>
<organism>
    <name type="scientific">Nostoc punctiforme (strain ATCC 29133 / PCC 73102)</name>
    <dbReference type="NCBI Taxonomy" id="63737"/>
    <lineage>
        <taxon>Bacteria</taxon>
        <taxon>Bacillati</taxon>
        <taxon>Cyanobacteriota</taxon>
        <taxon>Cyanophyceae</taxon>
        <taxon>Nostocales</taxon>
        <taxon>Nostocaceae</taxon>
        <taxon>Nostoc</taxon>
    </lineage>
</organism>
<dbReference type="EC" id="4.2.1.96" evidence="1"/>
<dbReference type="EMBL" id="CP001037">
    <property type="protein sequence ID" value="ACC82915.1"/>
    <property type="molecule type" value="Genomic_DNA"/>
</dbReference>
<dbReference type="RefSeq" id="WP_012410875.1">
    <property type="nucleotide sequence ID" value="NC_010628.1"/>
</dbReference>
<dbReference type="SMR" id="B2IVV2"/>
<dbReference type="STRING" id="63737.Npun_F4554"/>
<dbReference type="EnsemblBacteria" id="ACC82915">
    <property type="protein sequence ID" value="ACC82915"/>
    <property type="gene ID" value="Npun_F4554"/>
</dbReference>
<dbReference type="KEGG" id="npu:Npun_F4554"/>
<dbReference type="eggNOG" id="COG2154">
    <property type="taxonomic scope" value="Bacteria"/>
</dbReference>
<dbReference type="HOGENOM" id="CLU_081974_4_0_3"/>
<dbReference type="OrthoDB" id="9794987at2"/>
<dbReference type="PhylomeDB" id="B2IVV2"/>
<dbReference type="Proteomes" id="UP000001191">
    <property type="component" value="Chromosome"/>
</dbReference>
<dbReference type="GO" id="GO:0008124">
    <property type="term" value="F:4-alpha-hydroxytetrahydrobiopterin dehydratase activity"/>
    <property type="evidence" value="ECO:0007669"/>
    <property type="project" value="UniProtKB-UniRule"/>
</dbReference>
<dbReference type="GO" id="GO:0006729">
    <property type="term" value="P:tetrahydrobiopterin biosynthetic process"/>
    <property type="evidence" value="ECO:0007669"/>
    <property type="project" value="InterPro"/>
</dbReference>
<dbReference type="CDD" id="cd00488">
    <property type="entry name" value="PCD_DCoH"/>
    <property type="match status" value="1"/>
</dbReference>
<dbReference type="Gene3D" id="3.30.1360.20">
    <property type="entry name" value="Transcriptional coactivator/pterin dehydratase"/>
    <property type="match status" value="1"/>
</dbReference>
<dbReference type="HAMAP" id="MF_00434">
    <property type="entry name" value="Pterin_4_alpha"/>
    <property type="match status" value="1"/>
</dbReference>
<dbReference type="InterPro" id="IPR036428">
    <property type="entry name" value="PCD_sf"/>
</dbReference>
<dbReference type="InterPro" id="IPR001533">
    <property type="entry name" value="Pterin_deHydtase"/>
</dbReference>
<dbReference type="NCBIfam" id="NF002017">
    <property type="entry name" value="PRK00823.1-2"/>
    <property type="match status" value="1"/>
</dbReference>
<dbReference type="PANTHER" id="PTHR12599">
    <property type="entry name" value="PTERIN-4-ALPHA-CARBINOLAMINE DEHYDRATASE"/>
    <property type="match status" value="1"/>
</dbReference>
<dbReference type="PANTHER" id="PTHR12599:SF0">
    <property type="entry name" value="PTERIN-4-ALPHA-CARBINOLAMINE DEHYDRATASE"/>
    <property type="match status" value="1"/>
</dbReference>
<dbReference type="Pfam" id="PF01329">
    <property type="entry name" value="Pterin_4a"/>
    <property type="match status" value="1"/>
</dbReference>
<dbReference type="SUPFAM" id="SSF55248">
    <property type="entry name" value="PCD-like"/>
    <property type="match status" value="1"/>
</dbReference>
<evidence type="ECO:0000255" key="1">
    <source>
        <dbReference type="HAMAP-Rule" id="MF_00434"/>
    </source>
</evidence>
<protein>
    <recommendedName>
        <fullName evidence="1">Putative pterin-4-alpha-carbinolamine dehydratase</fullName>
        <shortName evidence="1">PHS</shortName>
        <ecNumber evidence="1">4.2.1.96</ecNumber>
    </recommendedName>
    <alternativeName>
        <fullName evidence="1">4-alpha-hydroxy-tetrahydropterin dehydratase</fullName>
    </alternativeName>
    <alternativeName>
        <fullName evidence="1">Pterin carbinolamine dehydratase</fullName>
        <shortName evidence="1">PCD</shortName>
    </alternativeName>
</protein>
<sequence>MTQLLTKTEIQEQAKVLSGWTVEESKLHITRTFKDFIQAIEFVNKLVEPAESAGHHPDIKISYNKVKITLTTHDAGGLTQADFDVAQTISQIK</sequence>
<proteinExistence type="inferred from homology"/>
<keyword id="KW-0456">Lyase</keyword>
<keyword id="KW-1185">Reference proteome</keyword>
<reference key="1">
    <citation type="journal article" date="2013" name="Plant Physiol.">
        <title>A Nostoc punctiforme Sugar Transporter Necessary to Establish a Cyanobacterium-Plant Symbiosis.</title>
        <authorList>
            <person name="Ekman M."/>
            <person name="Picossi S."/>
            <person name="Campbell E.L."/>
            <person name="Meeks J.C."/>
            <person name="Flores E."/>
        </authorList>
    </citation>
    <scope>NUCLEOTIDE SEQUENCE [LARGE SCALE GENOMIC DNA]</scope>
    <source>
        <strain>ATCC 29133 / PCC 73102</strain>
    </source>
</reference>
<name>PHS_NOSP7</name>